<reference key="1">
    <citation type="journal article" date="2004" name="Proc. Natl. Acad. Sci. U.S.A.">
        <title>Genome sequence of the deep-sea gamma-proteobacterium Idiomarina loihiensis reveals amino acid fermentation as a source of carbon and energy.</title>
        <authorList>
            <person name="Hou S."/>
            <person name="Saw J.H."/>
            <person name="Lee K.S."/>
            <person name="Freitas T.A."/>
            <person name="Belisle C."/>
            <person name="Kawarabayasi Y."/>
            <person name="Donachie S.P."/>
            <person name="Pikina A."/>
            <person name="Galperin M.Y."/>
            <person name="Koonin E.V."/>
            <person name="Makarova K.S."/>
            <person name="Omelchenko M.V."/>
            <person name="Sorokin A."/>
            <person name="Wolf Y.I."/>
            <person name="Li Q.X."/>
            <person name="Keum Y.S."/>
            <person name="Campbell S."/>
            <person name="Denery J."/>
            <person name="Aizawa S."/>
            <person name="Shibata S."/>
            <person name="Malahoff A."/>
            <person name="Alam M."/>
        </authorList>
    </citation>
    <scope>NUCLEOTIDE SEQUENCE [LARGE SCALE GENOMIC DNA]</scope>
    <source>
        <strain>ATCC BAA-735 / DSM 15497 / L2-TR</strain>
    </source>
</reference>
<sequence>MKRIDIDDDLYTYIASHTRQIGESASDILRRLLDVNSSEPEADSKSEPTESVFNRLNEQDVRIQKSVVARFLYILSMLYRCHPSEFSQVLDIRGRDRQYFARSEEALLTSGNSTNPKQIPDSPFWVITNTNTTKKKAMLTQVAEKLGYQSADAEKIRDFL</sequence>
<feature type="chain" id="PRO_0000413926" description="Negative modulator of initiation of replication">
    <location>
        <begin position="1"/>
        <end position="160"/>
    </location>
</feature>
<comment type="function">
    <text evidence="1">Negative regulator of replication initiation, which contributes to regulation of DNA replication and ensures that replication initiation occurs exactly once per chromosome per cell cycle. Binds to pairs of hemimethylated GATC sequences in the oriC region, thus preventing assembly of replication proteins and re-initiation at newly replicated origins. Repression is relieved when the region becomes fully methylated.</text>
</comment>
<comment type="subunit">
    <text evidence="1">Homodimer. Polymerizes to form helical filaments.</text>
</comment>
<comment type="subcellular location">
    <subcellularLocation>
        <location evidence="1">Cytoplasm</location>
    </subcellularLocation>
</comment>
<comment type="similarity">
    <text evidence="1">Belongs to the SeqA family.</text>
</comment>
<proteinExistence type="inferred from homology"/>
<accession>Q5QXP4</accession>
<protein>
    <recommendedName>
        <fullName evidence="1">Negative modulator of initiation of replication</fullName>
    </recommendedName>
</protein>
<gene>
    <name evidence="1" type="primary">seqA</name>
    <name type="ordered locus">IL1472</name>
</gene>
<dbReference type="EMBL" id="AE017340">
    <property type="protein sequence ID" value="AAV82312.1"/>
    <property type="molecule type" value="Genomic_DNA"/>
</dbReference>
<dbReference type="RefSeq" id="WP_011234718.1">
    <property type="nucleotide sequence ID" value="NC_006512.1"/>
</dbReference>
<dbReference type="SMR" id="Q5QXP4"/>
<dbReference type="STRING" id="283942.IL1472"/>
<dbReference type="GeneID" id="41336649"/>
<dbReference type="KEGG" id="ilo:IL1472"/>
<dbReference type="eggNOG" id="COG3057">
    <property type="taxonomic scope" value="Bacteria"/>
</dbReference>
<dbReference type="HOGENOM" id="CLU_099733_0_0_6"/>
<dbReference type="OrthoDB" id="5591069at2"/>
<dbReference type="Proteomes" id="UP000001171">
    <property type="component" value="Chromosome"/>
</dbReference>
<dbReference type="GO" id="GO:0005737">
    <property type="term" value="C:cytoplasm"/>
    <property type="evidence" value="ECO:0007669"/>
    <property type="project" value="UniProtKB-SubCell"/>
</dbReference>
<dbReference type="GO" id="GO:0003677">
    <property type="term" value="F:DNA binding"/>
    <property type="evidence" value="ECO:0007669"/>
    <property type="project" value="UniProtKB-UniRule"/>
</dbReference>
<dbReference type="GO" id="GO:0032297">
    <property type="term" value="P:negative regulation of DNA-templated DNA replication initiation"/>
    <property type="evidence" value="ECO:0007669"/>
    <property type="project" value="UniProtKB-UniRule"/>
</dbReference>
<dbReference type="GO" id="GO:0006355">
    <property type="term" value="P:regulation of DNA-templated transcription"/>
    <property type="evidence" value="ECO:0007669"/>
    <property type="project" value="InterPro"/>
</dbReference>
<dbReference type="Gene3D" id="1.10.1220.10">
    <property type="entry name" value="Met repressor-like"/>
    <property type="match status" value="1"/>
</dbReference>
<dbReference type="Gene3D" id="1.20.1380.10">
    <property type="entry name" value="Replication modulator SeqA, C-terminal DNA-binding domain"/>
    <property type="match status" value="1"/>
</dbReference>
<dbReference type="HAMAP" id="MF_00908">
    <property type="entry name" value="SeqA"/>
    <property type="match status" value="1"/>
</dbReference>
<dbReference type="InterPro" id="IPR013321">
    <property type="entry name" value="Arc_rbn_hlx_hlx"/>
</dbReference>
<dbReference type="InterPro" id="IPR010985">
    <property type="entry name" value="Ribbon_hlx_hlx"/>
</dbReference>
<dbReference type="InterPro" id="IPR005621">
    <property type="entry name" value="SeqA"/>
</dbReference>
<dbReference type="InterPro" id="IPR026577">
    <property type="entry name" value="SeqA_DNA-bd_C"/>
</dbReference>
<dbReference type="InterPro" id="IPR036835">
    <property type="entry name" value="SeqA_DNA-bd_C_sf"/>
</dbReference>
<dbReference type="InterPro" id="IPR033761">
    <property type="entry name" value="SeqA_N"/>
</dbReference>
<dbReference type="Pfam" id="PF03925">
    <property type="entry name" value="SeqA"/>
    <property type="match status" value="1"/>
</dbReference>
<dbReference type="Pfam" id="PF17206">
    <property type="entry name" value="SeqA_N"/>
    <property type="match status" value="1"/>
</dbReference>
<dbReference type="PIRSF" id="PIRSF019401">
    <property type="entry name" value="SeqA"/>
    <property type="match status" value="1"/>
</dbReference>
<dbReference type="SUPFAM" id="SSF82808">
    <property type="entry name" value="Replication modulator SeqA, C-terminal DNA-binding domain"/>
    <property type="match status" value="1"/>
</dbReference>
<dbReference type="SUPFAM" id="SSF47598">
    <property type="entry name" value="Ribbon-helix-helix"/>
    <property type="match status" value="1"/>
</dbReference>
<name>SEQA_IDILO</name>
<organism>
    <name type="scientific">Idiomarina loihiensis (strain ATCC BAA-735 / DSM 15497 / L2-TR)</name>
    <dbReference type="NCBI Taxonomy" id="283942"/>
    <lineage>
        <taxon>Bacteria</taxon>
        <taxon>Pseudomonadati</taxon>
        <taxon>Pseudomonadota</taxon>
        <taxon>Gammaproteobacteria</taxon>
        <taxon>Alteromonadales</taxon>
        <taxon>Idiomarinaceae</taxon>
        <taxon>Idiomarina</taxon>
    </lineage>
</organism>
<evidence type="ECO:0000255" key="1">
    <source>
        <dbReference type="HAMAP-Rule" id="MF_00908"/>
    </source>
</evidence>
<keyword id="KW-0963">Cytoplasm</keyword>
<keyword id="KW-0236">DNA replication inhibitor</keyword>
<keyword id="KW-0238">DNA-binding</keyword>
<keyword id="KW-1185">Reference proteome</keyword>